<sequence length="155" mass="17290">MSEADQKPVIIHTDGACSGNPGPGGWGAILKFGDVEKELKGGEPHTTNNRMELLAAISALEALTRPCSVDLYTDSQYVKNGIGSWIHNWKRNGWKTADKKPVKNVDLWQRLDAALKTHSIRWHWVKGHAGHAENERADQLARDGLTENRMKSRVK</sequence>
<gene>
    <name evidence="1" type="primary">rnhA</name>
    <name type="ordered locus">Rpal_4749</name>
</gene>
<reference key="1">
    <citation type="submission" date="2008-05" db="EMBL/GenBank/DDBJ databases">
        <title>Complete sequence of Rhodopseudomonas palustris TIE-1.</title>
        <authorList>
            <consortium name="US DOE Joint Genome Institute"/>
            <person name="Lucas S."/>
            <person name="Copeland A."/>
            <person name="Lapidus A."/>
            <person name="Glavina del Rio T."/>
            <person name="Dalin E."/>
            <person name="Tice H."/>
            <person name="Pitluck S."/>
            <person name="Chain P."/>
            <person name="Malfatti S."/>
            <person name="Shin M."/>
            <person name="Vergez L."/>
            <person name="Lang D."/>
            <person name="Schmutz J."/>
            <person name="Larimer F."/>
            <person name="Land M."/>
            <person name="Hauser L."/>
            <person name="Kyrpides N."/>
            <person name="Mikhailova N."/>
            <person name="Emerson D."/>
            <person name="Newman D.K."/>
            <person name="Roden E."/>
            <person name="Richardson P."/>
        </authorList>
    </citation>
    <scope>NUCLEOTIDE SEQUENCE [LARGE SCALE GENOMIC DNA]</scope>
    <source>
        <strain>TIE-1</strain>
    </source>
</reference>
<name>RNH_RHOPT</name>
<dbReference type="EC" id="3.1.26.4" evidence="1"/>
<dbReference type="EMBL" id="CP001096">
    <property type="protein sequence ID" value="ACF03240.1"/>
    <property type="molecule type" value="Genomic_DNA"/>
</dbReference>
<dbReference type="RefSeq" id="WP_011159804.1">
    <property type="nucleotide sequence ID" value="NC_011004.1"/>
</dbReference>
<dbReference type="SMR" id="B3Q6U1"/>
<dbReference type="GeneID" id="66895395"/>
<dbReference type="KEGG" id="rpt:Rpal_4749"/>
<dbReference type="HOGENOM" id="CLU_030894_6_0_5"/>
<dbReference type="OrthoDB" id="7845843at2"/>
<dbReference type="Proteomes" id="UP000001725">
    <property type="component" value="Chromosome"/>
</dbReference>
<dbReference type="GO" id="GO:0005737">
    <property type="term" value="C:cytoplasm"/>
    <property type="evidence" value="ECO:0007669"/>
    <property type="project" value="UniProtKB-SubCell"/>
</dbReference>
<dbReference type="GO" id="GO:0000287">
    <property type="term" value="F:magnesium ion binding"/>
    <property type="evidence" value="ECO:0007669"/>
    <property type="project" value="UniProtKB-UniRule"/>
</dbReference>
<dbReference type="GO" id="GO:0003676">
    <property type="term" value="F:nucleic acid binding"/>
    <property type="evidence" value="ECO:0007669"/>
    <property type="project" value="InterPro"/>
</dbReference>
<dbReference type="GO" id="GO:0004523">
    <property type="term" value="F:RNA-DNA hybrid ribonuclease activity"/>
    <property type="evidence" value="ECO:0007669"/>
    <property type="project" value="UniProtKB-UniRule"/>
</dbReference>
<dbReference type="GO" id="GO:0043137">
    <property type="term" value="P:DNA replication, removal of RNA primer"/>
    <property type="evidence" value="ECO:0007669"/>
    <property type="project" value="TreeGrafter"/>
</dbReference>
<dbReference type="CDD" id="cd09278">
    <property type="entry name" value="RNase_HI_prokaryote_like"/>
    <property type="match status" value="1"/>
</dbReference>
<dbReference type="FunFam" id="3.30.420.10:FF:000008">
    <property type="entry name" value="Ribonuclease H"/>
    <property type="match status" value="1"/>
</dbReference>
<dbReference type="Gene3D" id="3.30.420.10">
    <property type="entry name" value="Ribonuclease H-like superfamily/Ribonuclease H"/>
    <property type="match status" value="1"/>
</dbReference>
<dbReference type="HAMAP" id="MF_00042">
    <property type="entry name" value="RNase_H"/>
    <property type="match status" value="1"/>
</dbReference>
<dbReference type="InterPro" id="IPR050092">
    <property type="entry name" value="RNase_H"/>
</dbReference>
<dbReference type="InterPro" id="IPR012337">
    <property type="entry name" value="RNaseH-like_sf"/>
</dbReference>
<dbReference type="InterPro" id="IPR002156">
    <property type="entry name" value="RNaseH_domain"/>
</dbReference>
<dbReference type="InterPro" id="IPR036397">
    <property type="entry name" value="RNaseH_sf"/>
</dbReference>
<dbReference type="InterPro" id="IPR022892">
    <property type="entry name" value="RNaseHI"/>
</dbReference>
<dbReference type="NCBIfam" id="NF001236">
    <property type="entry name" value="PRK00203.1"/>
    <property type="match status" value="1"/>
</dbReference>
<dbReference type="PANTHER" id="PTHR10642">
    <property type="entry name" value="RIBONUCLEASE H1"/>
    <property type="match status" value="1"/>
</dbReference>
<dbReference type="PANTHER" id="PTHR10642:SF26">
    <property type="entry name" value="RIBONUCLEASE H1"/>
    <property type="match status" value="1"/>
</dbReference>
<dbReference type="Pfam" id="PF00075">
    <property type="entry name" value="RNase_H"/>
    <property type="match status" value="1"/>
</dbReference>
<dbReference type="SUPFAM" id="SSF53098">
    <property type="entry name" value="Ribonuclease H-like"/>
    <property type="match status" value="1"/>
</dbReference>
<dbReference type="PROSITE" id="PS50879">
    <property type="entry name" value="RNASE_H_1"/>
    <property type="match status" value="1"/>
</dbReference>
<accession>B3Q6U1</accession>
<protein>
    <recommendedName>
        <fullName evidence="1">Ribonuclease H</fullName>
        <shortName evidence="1">RNase H</shortName>
        <ecNumber evidence="1">3.1.26.4</ecNumber>
    </recommendedName>
</protein>
<comment type="function">
    <text evidence="1">Endonuclease that specifically degrades the RNA of RNA-DNA hybrids.</text>
</comment>
<comment type="catalytic activity">
    <reaction evidence="1">
        <text>Endonucleolytic cleavage to 5'-phosphomonoester.</text>
        <dbReference type="EC" id="3.1.26.4"/>
    </reaction>
</comment>
<comment type="cofactor">
    <cofactor evidence="1">
        <name>Mg(2+)</name>
        <dbReference type="ChEBI" id="CHEBI:18420"/>
    </cofactor>
    <text evidence="1">Binds 1 Mg(2+) ion per subunit. May bind a second metal ion at a regulatory site, or after substrate binding.</text>
</comment>
<comment type="subunit">
    <text evidence="1">Monomer.</text>
</comment>
<comment type="subcellular location">
    <subcellularLocation>
        <location evidence="1">Cytoplasm</location>
    </subcellularLocation>
</comment>
<comment type="similarity">
    <text evidence="1">Belongs to the RNase H family.</text>
</comment>
<feature type="chain" id="PRO_1000090910" description="Ribonuclease H">
    <location>
        <begin position="1"/>
        <end position="155"/>
    </location>
</feature>
<feature type="domain" description="RNase H type-1" evidence="2">
    <location>
        <begin position="5"/>
        <end position="146"/>
    </location>
</feature>
<feature type="region of interest" description="Disordered" evidence="3">
    <location>
        <begin position="133"/>
        <end position="155"/>
    </location>
</feature>
<feature type="binding site" evidence="1">
    <location>
        <position position="14"/>
    </location>
    <ligand>
        <name>Mg(2+)</name>
        <dbReference type="ChEBI" id="CHEBI:18420"/>
        <label>1</label>
    </ligand>
</feature>
<feature type="binding site" evidence="1">
    <location>
        <position position="14"/>
    </location>
    <ligand>
        <name>Mg(2+)</name>
        <dbReference type="ChEBI" id="CHEBI:18420"/>
        <label>2</label>
    </ligand>
</feature>
<feature type="binding site" evidence="1">
    <location>
        <position position="52"/>
    </location>
    <ligand>
        <name>Mg(2+)</name>
        <dbReference type="ChEBI" id="CHEBI:18420"/>
        <label>1</label>
    </ligand>
</feature>
<feature type="binding site" evidence="1">
    <location>
        <position position="74"/>
    </location>
    <ligand>
        <name>Mg(2+)</name>
        <dbReference type="ChEBI" id="CHEBI:18420"/>
        <label>1</label>
    </ligand>
</feature>
<feature type="binding site" evidence="1">
    <location>
        <position position="138"/>
    </location>
    <ligand>
        <name>Mg(2+)</name>
        <dbReference type="ChEBI" id="CHEBI:18420"/>
        <label>2</label>
    </ligand>
</feature>
<organism>
    <name type="scientific">Rhodopseudomonas palustris (strain TIE-1)</name>
    <dbReference type="NCBI Taxonomy" id="395960"/>
    <lineage>
        <taxon>Bacteria</taxon>
        <taxon>Pseudomonadati</taxon>
        <taxon>Pseudomonadota</taxon>
        <taxon>Alphaproteobacteria</taxon>
        <taxon>Hyphomicrobiales</taxon>
        <taxon>Nitrobacteraceae</taxon>
        <taxon>Rhodopseudomonas</taxon>
    </lineage>
</organism>
<proteinExistence type="inferred from homology"/>
<keyword id="KW-0963">Cytoplasm</keyword>
<keyword id="KW-0255">Endonuclease</keyword>
<keyword id="KW-0378">Hydrolase</keyword>
<keyword id="KW-0460">Magnesium</keyword>
<keyword id="KW-0479">Metal-binding</keyword>
<keyword id="KW-0540">Nuclease</keyword>
<evidence type="ECO:0000255" key="1">
    <source>
        <dbReference type="HAMAP-Rule" id="MF_00042"/>
    </source>
</evidence>
<evidence type="ECO:0000255" key="2">
    <source>
        <dbReference type="PROSITE-ProRule" id="PRU00408"/>
    </source>
</evidence>
<evidence type="ECO:0000256" key="3">
    <source>
        <dbReference type="SAM" id="MobiDB-lite"/>
    </source>
</evidence>